<keyword id="KW-0002">3D-structure</keyword>
<keyword id="KW-0997">Cell inner membrane</keyword>
<keyword id="KW-1003">Cell membrane</keyword>
<keyword id="KW-0407">Ion channel</keyword>
<keyword id="KW-0406">Ion transport</keyword>
<keyword id="KW-0472">Membrane</keyword>
<keyword id="KW-0479">Metal-binding</keyword>
<keyword id="KW-0630">Potassium</keyword>
<keyword id="KW-0633">Potassium transport</keyword>
<keyword id="KW-0812">Transmembrane</keyword>
<keyword id="KW-1133">Transmembrane helix</keyword>
<keyword id="KW-0813">Transport</keyword>
<reference evidence="7" key="1">
    <citation type="journal article" date="2003" name="Lancet">
        <title>Genome sequence of Vibrio parahaemolyticus: a pathogenic mechanism distinct from that of V. cholerae.</title>
        <authorList>
            <person name="Makino K."/>
            <person name="Oshima K."/>
            <person name="Kurokawa K."/>
            <person name="Yokoyama K."/>
            <person name="Uda T."/>
            <person name="Tagomori K."/>
            <person name="Iijima Y."/>
            <person name="Najima M."/>
            <person name="Nakano M."/>
            <person name="Yamashita A."/>
            <person name="Kubota Y."/>
            <person name="Kimura S."/>
            <person name="Yasunaga T."/>
            <person name="Honda T."/>
            <person name="Shinagawa H."/>
            <person name="Hattori M."/>
            <person name="Iida T."/>
        </authorList>
    </citation>
    <scope>NUCLEOTIDE SEQUENCE [LARGE SCALE GENOMIC DNA]</scope>
    <source>
        <strain>RIMD 2210633</strain>
    </source>
</reference>
<reference evidence="6 8" key="2">
    <citation type="journal article" date="2011" name="Nature">
        <title>Crystal structure of a potassium ion transporter, TrkH.</title>
        <authorList>
            <person name="Cao Y."/>
            <person name="Jin X."/>
            <person name="Huang H."/>
            <person name="Derebe M.G."/>
            <person name="Levin E.J."/>
            <person name="Kabaleeswaran V."/>
            <person name="Pan Y."/>
            <person name="Punta M."/>
            <person name="Love J."/>
            <person name="Weng J."/>
            <person name="Quick M."/>
            <person name="Ye S."/>
            <person name="Kloss B."/>
            <person name="Bruni R."/>
            <person name="Martinez-Hackert E."/>
            <person name="Hendrickson W.A."/>
            <person name="Rost B."/>
            <person name="Javitch J.A."/>
            <person name="Rajashankar K.R."/>
            <person name="Jiang Y."/>
            <person name="Zhou M."/>
        </authorList>
    </citation>
    <scope>X-RAY CRYSTALLOGRAPHY (3.51 ANGSTROMS) IN COMPLEX WITH POTASSIUM ION</scope>
    <scope>FUNCTION</scope>
    <scope>SUBUNIT</scope>
    <scope>TOPOLOGY</scope>
    <scope>SELECTIVITY FILTER</scope>
    <scope>MUTAGENESIS OF ARG-468</scope>
</reference>
<gene>
    <name evidence="5" type="primary">trkH</name>
    <name type="ordered locus">VP0032</name>
</gene>
<evidence type="ECO:0000250" key="1">
    <source>
        <dbReference type="UniProtKB" id="P0AFZ7"/>
    </source>
</evidence>
<evidence type="ECO:0000250" key="2">
    <source>
        <dbReference type="UniProtKB" id="P23849"/>
    </source>
</evidence>
<evidence type="ECO:0000255" key="3"/>
<evidence type="ECO:0000269" key="4">
    <source>
    </source>
</evidence>
<evidence type="ECO:0000303" key="5">
    <source>
    </source>
</evidence>
<evidence type="ECO:0000305" key="6"/>
<evidence type="ECO:0000312" key="7">
    <source>
        <dbReference type="EMBL" id="BAC58295.1"/>
    </source>
</evidence>
<evidence type="ECO:0000312" key="8">
    <source>
        <dbReference type="PDB" id="3PJZ"/>
    </source>
</evidence>
<evidence type="ECO:0007829" key="9">
    <source>
        <dbReference type="PDB" id="6V4J"/>
    </source>
</evidence>
<comment type="function">
    <text evidence="1 4">Low-affinity potassium transport system. Interacts with trk system potassium uptake protein TrkA and requires TrkE for transport activity. Selective for permeation of potassium ion and rubidium ion over smaller ions such as natrium or litium.</text>
</comment>
<comment type="subunit">
    <text evidence="4">Homodimer.</text>
</comment>
<comment type="interaction">
    <interactant intactId="EBI-15912091">
        <id>Q87TN7</id>
    </interactant>
    <interactant intactId="EBI-15912091">
        <id>Q87TN7</id>
        <label>trkH</label>
    </interactant>
    <organismsDiffer>false</organismsDiffer>
    <experiments>4</experiments>
</comment>
<comment type="subcellular location">
    <subcellularLocation>
        <location evidence="2">Cell inner membrane</location>
        <topology evidence="2 5">Multi-pass membrane protein</topology>
    </subcellularLocation>
</comment>
<comment type="similarity">
    <text evidence="3">Belongs to the TrkH potassium transport family.</text>
</comment>
<name>TRKH_VIBPA</name>
<accession>Q87TN7</accession>
<organism>
    <name type="scientific">Vibrio parahaemolyticus serotype O3:K6 (strain RIMD 2210633)</name>
    <dbReference type="NCBI Taxonomy" id="223926"/>
    <lineage>
        <taxon>Bacteria</taxon>
        <taxon>Pseudomonadati</taxon>
        <taxon>Pseudomonadota</taxon>
        <taxon>Gammaproteobacteria</taxon>
        <taxon>Vibrionales</taxon>
        <taxon>Vibrionaceae</taxon>
        <taxon>Vibrio</taxon>
    </lineage>
</organism>
<proteinExistence type="evidence at protein level"/>
<sequence>MQFRSIIRIVGLLLALFSVTMLAPALVALLYRDGAGVPFVTTFFVLLFCGAMCWFPNRRHKHELKSRDGFLIVVLFWTVLGSAGSLPFLIADNPNISVTDAFFESFSALTTTGATVIVGLDELPKAILFYRQFLQWFGGMGIIVLAVAILPVLGIGGMQLYRAEIPGPVKDTKMTPRIAETAKALWYIYLSLTIACAVAFWLAGMTPFDAISHSFSTIAIGGFSTHDASMGYFDSYAINLITVVFLLISACNFTLHFAAFASGGVHPKYYWKDPEFRAFIFIQVLLFLVCFLLLLKHHSYTSPYDAFDQALFQTVSISTTAGFTTTGFADWPLFLPVLLLFSSFIGGCAGSTGGGMKVIRILLLTLQGARELKRLVHPRAVYTIKVGGSALPQRVVDAVWGFFSAYALVFVVCMLGLIATGMDELSAFSAVAATLNNLGPGLGEVALHFGDVNDKAKWVLIVSMLFGRLEIFTLLILLTPTFWRS</sequence>
<dbReference type="EMBL" id="BA000031">
    <property type="protein sequence ID" value="BAC58295.1"/>
    <property type="molecule type" value="Genomic_DNA"/>
</dbReference>
<dbReference type="RefSeq" id="NP_796411.1">
    <property type="nucleotide sequence ID" value="NC_004603.1"/>
</dbReference>
<dbReference type="RefSeq" id="WP_005465049.1">
    <property type="nucleotide sequence ID" value="NC_004603.1"/>
</dbReference>
<dbReference type="PDB" id="3PJZ">
    <property type="method" value="X-ray"/>
    <property type="resolution" value="3.51 A"/>
    <property type="chains" value="A/B=1-485"/>
</dbReference>
<dbReference type="PDB" id="4J9U">
    <property type="method" value="X-ray"/>
    <property type="resolution" value="3.80 A"/>
    <property type="chains" value="A/B/C/D=1-485"/>
</dbReference>
<dbReference type="PDB" id="6V4J">
    <property type="method" value="EM"/>
    <property type="resolution" value="2.97 A"/>
    <property type="chains" value="A/B/C/D=1-485"/>
</dbReference>
<dbReference type="PDB" id="6V4K">
    <property type="method" value="X-ray"/>
    <property type="resolution" value="3.53 A"/>
    <property type="chains" value="A/B/C/D=1-485"/>
</dbReference>
<dbReference type="PDB" id="6V4L">
    <property type="method" value="X-ray"/>
    <property type="resolution" value="3.80 A"/>
    <property type="chains" value="A/B=1-485"/>
</dbReference>
<dbReference type="PDBsum" id="3PJZ"/>
<dbReference type="PDBsum" id="4J9U"/>
<dbReference type="PDBsum" id="6V4J"/>
<dbReference type="PDBsum" id="6V4K"/>
<dbReference type="PDBsum" id="6V4L"/>
<dbReference type="EMDB" id="EMD-21041"/>
<dbReference type="SMR" id="Q87TN7"/>
<dbReference type="DIP" id="DIP-59200N"/>
<dbReference type="TCDB" id="2.A.38.1.5">
    <property type="family name" value="the k(+) transporter (trk) family"/>
</dbReference>
<dbReference type="GeneID" id="1187488"/>
<dbReference type="KEGG" id="vpa:VP0032"/>
<dbReference type="PATRIC" id="fig|223926.6.peg.32"/>
<dbReference type="eggNOG" id="COG0168">
    <property type="taxonomic scope" value="Bacteria"/>
</dbReference>
<dbReference type="HOGENOM" id="CLU_030708_0_2_6"/>
<dbReference type="EvolutionaryTrace" id="Q87TN7"/>
<dbReference type="Proteomes" id="UP000002493">
    <property type="component" value="Chromosome 1"/>
</dbReference>
<dbReference type="GO" id="GO:0005886">
    <property type="term" value="C:plasma membrane"/>
    <property type="evidence" value="ECO:0000250"/>
    <property type="project" value="UniProtKB"/>
</dbReference>
<dbReference type="GO" id="GO:0042802">
    <property type="term" value="F:identical protein binding"/>
    <property type="evidence" value="ECO:0000353"/>
    <property type="project" value="IntAct"/>
</dbReference>
<dbReference type="GO" id="GO:0005267">
    <property type="term" value="F:potassium channel activity"/>
    <property type="evidence" value="ECO:0000314"/>
    <property type="project" value="UniProtKB"/>
</dbReference>
<dbReference type="GO" id="GO:0030955">
    <property type="term" value="F:potassium ion binding"/>
    <property type="evidence" value="ECO:0000314"/>
    <property type="project" value="UniProtKB"/>
</dbReference>
<dbReference type="GO" id="GO:0015379">
    <property type="term" value="F:potassium:chloride symporter activity"/>
    <property type="evidence" value="ECO:0007669"/>
    <property type="project" value="InterPro"/>
</dbReference>
<dbReference type="GO" id="GO:0042803">
    <property type="term" value="F:protein homodimerization activity"/>
    <property type="evidence" value="ECO:0000314"/>
    <property type="project" value="UniProtKB"/>
</dbReference>
<dbReference type="GO" id="GO:0071805">
    <property type="term" value="P:potassium ion transmembrane transport"/>
    <property type="evidence" value="ECO:0000314"/>
    <property type="project" value="UniProtKB"/>
</dbReference>
<dbReference type="InterPro" id="IPR003445">
    <property type="entry name" value="Cat_transpt"/>
</dbReference>
<dbReference type="InterPro" id="IPR004772">
    <property type="entry name" value="TrkH"/>
</dbReference>
<dbReference type="NCBIfam" id="TIGR00933">
    <property type="entry name" value="2a38"/>
    <property type="match status" value="1"/>
</dbReference>
<dbReference type="PANTHER" id="PTHR32024">
    <property type="entry name" value="TRK SYSTEM POTASSIUM UPTAKE PROTEIN TRKG-RELATED"/>
    <property type="match status" value="1"/>
</dbReference>
<dbReference type="PANTHER" id="PTHR32024:SF2">
    <property type="entry name" value="TRK SYSTEM POTASSIUM UPTAKE PROTEIN TRKG-RELATED"/>
    <property type="match status" value="1"/>
</dbReference>
<dbReference type="Pfam" id="PF02386">
    <property type="entry name" value="TrkH"/>
    <property type="match status" value="1"/>
</dbReference>
<dbReference type="PIRSF" id="PIRSF006247">
    <property type="entry name" value="TrkH"/>
    <property type="match status" value="1"/>
</dbReference>
<protein>
    <recommendedName>
        <fullName evidence="1 7">Trk system potassium uptake protein TrkH</fullName>
    </recommendedName>
</protein>
<feature type="chain" id="PRO_0000419291" description="Trk system potassium uptake protein TrkH">
    <location>
        <begin position="1"/>
        <end position="485"/>
    </location>
</feature>
<feature type="topological domain" description="Cytoplasmic" evidence="4">
    <location>
        <begin position="1"/>
        <end position="2"/>
    </location>
</feature>
<feature type="transmembrane region" description="Helical" evidence="4">
    <location>
        <begin position="3"/>
        <end position="29"/>
    </location>
</feature>
<feature type="topological domain" description="Periplasmic" evidence="4">
    <location>
        <begin position="30"/>
        <end position="35"/>
    </location>
</feature>
<feature type="transmembrane region" description="Helical" evidence="4">
    <location>
        <begin position="36"/>
        <end position="57"/>
    </location>
</feature>
<feature type="topological domain" description="Cytoplasmic" evidence="4">
    <location>
        <begin position="58"/>
        <end position="65"/>
    </location>
</feature>
<feature type="transmembrane region" description="Helical" evidence="4">
    <location>
        <begin position="66"/>
        <end position="90"/>
    </location>
</feature>
<feature type="topological domain" description="Periplasmic" evidence="4">
    <location>
        <begin position="91"/>
        <end status="unknown"/>
    </location>
</feature>
<feature type="intramembrane region" evidence="4">
    <location>
        <begin status="unknown"/>
        <end position="97"/>
    </location>
</feature>
<feature type="intramembrane region" description="Helical; Pore-forming" evidence="4">
    <location>
        <begin position="98"/>
        <end position="109"/>
    </location>
</feature>
<feature type="intramembrane region" evidence="4">
    <location>
        <begin position="110"/>
        <end position="115"/>
    </location>
</feature>
<feature type="topological domain" description="Periplasmic" evidence="4">
    <location>
        <begin position="116"/>
        <end position="124"/>
    </location>
</feature>
<feature type="transmembrane region" description="Helical" evidence="4">
    <location>
        <begin position="125"/>
        <end position="150"/>
    </location>
</feature>
<feature type="topological domain" description="Cytoplasmic" evidence="4">
    <location>
        <begin position="151"/>
        <end position="177"/>
    </location>
</feature>
<feature type="transmembrane region" description="Helical" evidence="4">
    <location>
        <begin position="178"/>
        <end position="202"/>
    </location>
</feature>
<feature type="topological domain" description="Periplasmic" evidence="4">
    <location>
        <begin position="203"/>
        <end position="205"/>
    </location>
</feature>
<feature type="intramembrane region" evidence="4">
    <location>
        <position position="206"/>
    </location>
</feature>
<feature type="intramembrane region" description="Helical; Pore-forming" evidence="4">
    <location>
        <begin position="207"/>
        <end position="218"/>
    </location>
</feature>
<feature type="intramembrane region" evidence="4">
    <location>
        <begin position="219"/>
        <end position="224"/>
    </location>
</feature>
<feature type="topological domain" description="Periplasmic" evidence="4">
    <location>
        <begin position="225"/>
        <end position="234"/>
    </location>
</feature>
<feature type="intramembrane region" description="Helical" evidence="4">
    <location>
        <begin position="235"/>
        <end position="250"/>
    </location>
</feature>
<feature type="intramembrane region" evidence="4">
    <location>
        <begin position="251"/>
        <end status="unknown"/>
    </location>
</feature>
<feature type="topological domain" description="Cytoplasmic" evidence="4">
    <location>
        <begin status="unknown"/>
        <end position="275"/>
    </location>
</feature>
<feature type="transmembrane region" description="Helical" evidence="4">
    <location>
        <begin position="276"/>
        <end position="296"/>
    </location>
</feature>
<feature type="topological domain" description="Periplasmic" evidence="4">
    <location>
        <begin position="297"/>
        <end status="unknown"/>
    </location>
</feature>
<feature type="intramembrane region" evidence="4">
    <location>
        <begin status="unknown"/>
        <end position="302"/>
    </location>
</feature>
<feature type="intramembrane region" description="Helical; Pore-forming" evidence="4">
    <location>
        <begin position="303"/>
        <end position="318"/>
    </location>
</feature>
<feature type="intramembrane region" evidence="4">
    <location>
        <begin position="319"/>
        <end position="324"/>
    </location>
</feature>
<feature type="topological domain" description="Periplasmic" evidence="4">
    <location>
        <begin position="325"/>
        <end position="332"/>
    </location>
</feature>
<feature type="intramembrane region" description="Helical" evidence="4">
    <location>
        <begin position="333"/>
        <end position="344"/>
    </location>
</feature>
<feature type="intramembrane region" description="Note=Loop between two helices" evidence="4">
    <location>
        <begin position="345"/>
        <end position="357"/>
    </location>
</feature>
<feature type="intramembrane region" description="Helical" evidence="4">
    <location>
        <begin position="358"/>
        <end status="unknown"/>
    </location>
</feature>
<feature type="topological domain" description="Cytoplasmic" evidence="4">
    <location>
        <begin status="unknown"/>
        <end position="391"/>
    </location>
</feature>
<feature type="transmembrane region" description="Helical" evidence="4">
    <location>
        <begin position="392"/>
        <end position="419"/>
    </location>
</feature>
<feature type="topological domain" description="Periplasmic" evidence="4">
    <location>
        <begin position="420"/>
        <end position="421"/>
    </location>
</feature>
<feature type="intramembrane region" evidence="4">
    <location>
        <begin position="422"/>
        <end position="423"/>
    </location>
</feature>
<feature type="intramembrane region" description="Helical; Pore-forming" evidence="4">
    <location>
        <begin position="424"/>
        <end position="434"/>
    </location>
</feature>
<feature type="intramembrane region" evidence="4">
    <location>
        <begin position="435"/>
        <end position="441"/>
    </location>
</feature>
<feature type="topological domain" description="Periplasmic" evidence="4">
    <location>
        <begin position="442"/>
        <end position="453"/>
    </location>
</feature>
<feature type="intramembrane region" description="Helical" evidence="4">
    <location>
        <begin position="454"/>
        <end position="465"/>
    </location>
</feature>
<feature type="intramembrane region" evidence="4">
    <location>
        <begin position="466"/>
        <end status="unknown"/>
    </location>
</feature>
<feature type="topological domain" description="Cytoplasmic" evidence="4">
    <location>
        <begin status="unknown"/>
        <end position="485"/>
    </location>
</feature>
<feature type="region of interest" description="Selectivity filter part 1" evidence="6">
    <location>
        <begin position="110"/>
        <end position="115"/>
    </location>
</feature>
<feature type="region of interest" description="Selectivity filter part 2" evidence="6">
    <location>
        <begin position="219"/>
        <end position="224"/>
    </location>
</feature>
<feature type="region of interest" description="Selectivity filter part 3" evidence="6">
    <location>
        <begin position="319"/>
        <end position="324"/>
    </location>
</feature>
<feature type="region of interest" description="Selectivity filter part 4" evidence="6">
    <location>
        <begin position="436"/>
        <end position="441"/>
    </location>
</feature>
<feature type="binding site" evidence="4">
    <location>
        <position position="111"/>
    </location>
    <ligand>
        <name>K(+)</name>
        <dbReference type="ChEBI" id="CHEBI:29103"/>
    </ligand>
</feature>
<feature type="binding site" evidence="4">
    <location>
        <position position="112"/>
    </location>
    <ligand>
        <name>K(+)</name>
        <dbReference type="ChEBI" id="CHEBI:29103"/>
    </ligand>
</feature>
<feature type="binding site" evidence="4">
    <location>
        <position position="220"/>
    </location>
    <ligand>
        <name>K(+)</name>
        <dbReference type="ChEBI" id="CHEBI:29103"/>
    </ligand>
</feature>
<feature type="binding site" evidence="4">
    <location>
        <position position="221"/>
    </location>
    <ligand>
        <name>K(+)</name>
        <dbReference type="ChEBI" id="CHEBI:29103"/>
    </ligand>
</feature>
<feature type="binding site" evidence="4">
    <location>
        <position position="320"/>
    </location>
    <ligand>
        <name>K(+)</name>
        <dbReference type="ChEBI" id="CHEBI:29103"/>
    </ligand>
</feature>
<feature type="binding site" evidence="4">
    <location>
        <position position="321"/>
    </location>
    <ligand>
        <name>K(+)</name>
        <dbReference type="ChEBI" id="CHEBI:29103"/>
    </ligand>
</feature>
<feature type="binding site" evidence="4">
    <location>
        <position position="437"/>
    </location>
    <ligand>
        <name>K(+)</name>
        <dbReference type="ChEBI" id="CHEBI:29103"/>
    </ligand>
</feature>
<feature type="binding site" evidence="4">
    <location>
        <position position="438"/>
    </location>
    <ligand>
        <name>K(+)</name>
        <dbReference type="ChEBI" id="CHEBI:29103"/>
    </ligand>
</feature>
<feature type="mutagenesis site" description="Significant increase in the rate of potassium ion flux." evidence="4">
    <original>R</original>
    <variation>A</variation>
    <location>
        <position position="468"/>
    </location>
</feature>
<feature type="helix" evidence="9">
    <location>
        <begin position="3"/>
        <end position="19"/>
    </location>
</feature>
<feature type="helix" evidence="9">
    <location>
        <begin position="24"/>
        <end position="26"/>
    </location>
</feature>
<feature type="helix" evidence="9">
    <location>
        <begin position="38"/>
        <end position="47"/>
    </location>
</feature>
<feature type="turn" evidence="9">
    <location>
        <begin position="48"/>
        <end position="54"/>
    </location>
</feature>
<feature type="helix" evidence="9">
    <location>
        <begin position="70"/>
        <end position="75"/>
    </location>
</feature>
<feature type="helix" evidence="9">
    <location>
        <begin position="76"/>
        <end position="78"/>
    </location>
</feature>
<feature type="strand" evidence="9">
    <location>
        <begin position="79"/>
        <end position="85"/>
    </location>
</feature>
<feature type="helix" evidence="9">
    <location>
        <begin position="86"/>
        <end position="88"/>
    </location>
</feature>
<feature type="helix" evidence="9">
    <location>
        <begin position="98"/>
        <end position="108"/>
    </location>
</feature>
<feature type="turn" evidence="9">
    <location>
        <begin position="109"/>
        <end position="111"/>
    </location>
</feature>
<feature type="helix" evidence="9">
    <location>
        <begin position="125"/>
        <end position="148"/>
    </location>
</feature>
<feature type="turn" evidence="9">
    <location>
        <begin position="149"/>
        <end position="152"/>
    </location>
</feature>
<feature type="helix" evidence="9">
    <location>
        <begin position="181"/>
        <end position="201"/>
    </location>
</feature>
<feature type="turn" evidence="9">
    <location>
        <begin position="202"/>
        <end position="204"/>
    </location>
</feature>
<feature type="helix" evidence="9">
    <location>
        <begin position="207"/>
        <end position="216"/>
    </location>
</feature>
<feature type="strand" evidence="9">
    <location>
        <begin position="225"/>
        <end position="233"/>
    </location>
</feature>
<feature type="helix" evidence="9">
    <location>
        <begin position="236"/>
        <end position="251"/>
    </location>
</feature>
<feature type="helix" evidence="9">
    <location>
        <begin position="255"/>
        <end position="260"/>
    </location>
</feature>
<feature type="strand" evidence="9">
    <location>
        <begin position="261"/>
        <end position="263"/>
    </location>
</feature>
<feature type="helix" evidence="9">
    <location>
        <begin position="266"/>
        <end position="270"/>
    </location>
</feature>
<feature type="helix" evidence="9">
    <location>
        <begin position="274"/>
        <end position="297"/>
    </location>
</feature>
<feature type="helix" evidence="9">
    <location>
        <begin position="303"/>
        <end position="318"/>
    </location>
</feature>
<feature type="strand" evidence="9">
    <location>
        <begin position="328"/>
        <end position="331"/>
    </location>
</feature>
<feature type="helix" evidence="9">
    <location>
        <begin position="334"/>
        <end position="344"/>
    </location>
</feature>
<feature type="helix" evidence="9">
    <location>
        <begin position="358"/>
        <end position="376"/>
    </location>
</feature>
<feature type="helix" evidence="9">
    <location>
        <begin position="393"/>
        <end position="419"/>
    </location>
</feature>
<feature type="helix" evidence="9">
    <location>
        <begin position="425"/>
        <end position="434"/>
    </location>
</feature>
<feature type="turn" evidence="9">
    <location>
        <begin position="435"/>
        <end position="437"/>
    </location>
</feature>
<feature type="helix" evidence="9">
    <location>
        <begin position="443"/>
        <end position="445"/>
    </location>
</feature>
<feature type="strand" evidence="9">
    <location>
        <begin position="450"/>
        <end position="452"/>
    </location>
</feature>
<feature type="helix" evidence="9">
    <location>
        <begin position="454"/>
        <end position="468"/>
    </location>
</feature>
<feature type="helix" evidence="9">
    <location>
        <begin position="472"/>
        <end position="478"/>
    </location>
</feature>
<feature type="turn" evidence="9">
    <location>
        <begin position="480"/>
        <end position="482"/>
    </location>
</feature>